<dbReference type="EC" id="5.1.1.8" evidence="2"/>
<dbReference type="EMBL" id="CP001769">
    <property type="protein sequence ID" value="ADB37528.1"/>
    <property type="molecule type" value="Genomic_DNA"/>
</dbReference>
<dbReference type="SMR" id="D2QN44"/>
<dbReference type="STRING" id="504472.Slin_1478"/>
<dbReference type="KEGG" id="sli:Slin_1478"/>
<dbReference type="eggNOG" id="COG3938">
    <property type="taxonomic scope" value="Bacteria"/>
</dbReference>
<dbReference type="HOGENOM" id="CLU_036729_0_0_10"/>
<dbReference type="Proteomes" id="UP000002028">
    <property type="component" value="Chromosome"/>
</dbReference>
<dbReference type="GO" id="GO:0047580">
    <property type="term" value="F:4-hydroxyproline epimerase activity"/>
    <property type="evidence" value="ECO:0007669"/>
    <property type="project" value="UniProtKB-EC"/>
</dbReference>
<dbReference type="FunFam" id="3.10.310.10:FF:000005">
    <property type="entry name" value="Proline racemase"/>
    <property type="match status" value="1"/>
</dbReference>
<dbReference type="Gene3D" id="3.10.310.10">
    <property type="entry name" value="Diaminopimelate Epimerase, Chain A, domain 1"/>
    <property type="match status" value="2"/>
</dbReference>
<dbReference type="InterPro" id="IPR008794">
    <property type="entry name" value="Pro_racemase_fam"/>
</dbReference>
<dbReference type="NCBIfam" id="NF010578">
    <property type="entry name" value="PRK13971.1"/>
    <property type="match status" value="1"/>
</dbReference>
<dbReference type="PANTHER" id="PTHR33442:SF5">
    <property type="entry name" value="BIFUNCTIONAL TRANS-3-HYDROXY-L-PROLINE DEHYDRATASE_2-EPIMERASE"/>
    <property type="match status" value="1"/>
</dbReference>
<dbReference type="PANTHER" id="PTHR33442">
    <property type="entry name" value="TRANS-3-HYDROXY-L-PROLINE DEHYDRATASE"/>
    <property type="match status" value="1"/>
</dbReference>
<dbReference type="Pfam" id="PF05544">
    <property type="entry name" value="Pro_racemase"/>
    <property type="match status" value="1"/>
</dbReference>
<dbReference type="PIRSF" id="PIRSF029792">
    <property type="entry name" value="Pro_racemase"/>
    <property type="match status" value="1"/>
</dbReference>
<dbReference type="SFLD" id="SFLDS00028">
    <property type="entry name" value="Proline_Racemase"/>
    <property type="match status" value="1"/>
</dbReference>
<dbReference type="SUPFAM" id="SSF54506">
    <property type="entry name" value="Diaminopimelate epimerase-like"/>
    <property type="match status" value="1"/>
</dbReference>
<accession>D2QN44</accession>
<reference key="1">
    <citation type="submission" date="2009-09" db="EMBL/GenBank/DDBJ databases">
        <title>The complete chromosome of Spirosoma linguale DSM 74.</title>
        <authorList>
            <consortium name="US DOE Joint Genome Institute (JGI-PGF)"/>
            <person name="Lucas S."/>
            <person name="Copeland A."/>
            <person name="Lapidus A."/>
            <person name="Glavina del Rio T."/>
            <person name="Dalin E."/>
            <person name="Tice H."/>
            <person name="Bruce D."/>
            <person name="Goodwin L."/>
            <person name="Pitluck S."/>
            <person name="Kyrpides N."/>
            <person name="Mavromatis K."/>
            <person name="Mikhailova N."/>
            <person name="Ovchinnikova G."/>
            <person name="Saunders E."/>
            <person name="Brettin T."/>
            <person name="Detter J.C."/>
            <person name="Han C."/>
            <person name="Larimer F."/>
            <person name="Land M."/>
            <person name="Hauser L."/>
            <person name="Markowitz V."/>
            <person name="Cheng J.-F."/>
            <person name="Hugenholtz P."/>
            <person name="Woyke T."/>
            <person name="Wu D."/>
            <person name="Tindal B."/>
            <person name="Schutze A."/>
            <person name="Schneider S."/>
            <person name="Goker M."/>
            <person name="Klenk H.-P."/>
            <person name="Eisen J.A."/>
        </authorList>
    </citation>
    <scope>NUCLEOTIDE SEQUENCE [LARGE SCALE GENOMIC DNA]</scope>
    <source>
        <strain>ATCC 33905 / DSM 74 / LMG 10896 / Claus 1</strain>
    </source>
</reference>
<reference key="2">
    <citation type="journal article" date="2014" name="Elife">
        <title>Prediction and characterization of enzymatic activities guided by sequence similarity and genome neighborhood networks.</title>
        <authorList>
            <person name="Zhao S."/>
            <person name="Sakai A."/>
            <person name="Zhang X."/>
            <person name="Vetting M.W."/>
            <person name="Kumar R."/>
            <person name="Hillerich B."/>
            <person name="San Francisco B."/>
            <person name="Solbiati J."/>
            <person name="Steves A."/>
            <person name="Brown S."/>
            <person name="Akiva E."/>
            <person name="Barber A."/>
            <person name="Seidel R.D."/>
            <person name="Babbitt P.C."/>
            <person name="Almo S.C."/>
            <person name="Gerlt J.A."/>
            <person name="Jacobson M.P."/>
        </authorList>
    </citation>
    <scope>FUNCTION</scope>
    <scope>CATALYTIC ACTIVITY</scope>
</reference>
<evidence type="ECO:0000250" key="1">
    <source>
        <dbReference type="UniProtKB" id="Q4KGU2"/>
    </source>
</evidence>
<evidence type="ECO:0000269" key="2">
    <source>
    </source>
</evidence>
<evidence type="ECO:0000303" key="3">
    <source>
    </source>
</evidence>
<evidence type="ECO:0000305" key="4"/>
<evidence type="ECO:0000312" key="5">
    <source>
        <dbReference type="EMBL" id="ADB37528.1"/>
    </source>
</evidence>
<protein>
    <recommendedName>
        <fullName evidence="3">4-hydroxyproline 2-epimerase</fullName>
        <shortName>4Hyp 2-epimerase</shortName>
        <shortName evidence="3">4HypE</shortName>
        <ecNumber evidence="2">5.1.1.8</ecNumber>
    </recommendedName>
</protein>
<gene>
    <name evidence="5" type="ordered locus">Slin_1478</name>
</gene>
<proteinExistence type="evidence at protein level"/>
<feature type="chain" id="PRO_0000432278" description="4-hydroxyproline 2-epimerase">
    <location>
        <begin position="1"/>
        <end position="334"/>
    </location>
</feature>
<feature type="active site" description="Proton acceptor" evidence="1">
    <location>
        <position position="91"/>
    </location>
</feature>
<feature type="active site" description="Proton donor" evidence="1">
    <location>
        <position position="254"/>
    </location>
</feature>
<feature type="binding site" evidence="1">
    <location>
        <begin position="92"/>
        <end position="93"/>
    </location>
    <ligand>
        <name>substrate</name>
    </ligand>
</feature>
<feature type="binding site" evidence="1">
    <location>
        <position position="224"/>
    </location>
    <ligand>
        <name>substrate</name>
    </ligand>
</feature>
<feature type="binding site" evidence="1">
    <location>
        <position position="250"/>
    </location>
    <ligand>
        <name>substrate</name>
    </ligand>
</feature>
<feature type="binding site" evidence="1">
    <location>
        <begin position="255"/>
        <end position="256"/>
    </location>
    <ligand>
        <name>substrate</name>
    </ligand>
</feature>
<keyword id="KW-0413">Isomerase</keyword>
<name>4HYPE_SPILD</name>
<organism>
    <name type="scientific">Spirosoma linguale (strain ATCC 33905 / DSM 74 / LMG 10896 / Claus 1)</name>
    <dbReference type="NCBI Taxonomy" id="504472"/>
    <lineage>
        <taxon>Bacteria</taxon>
        <taxon>Pseudomonadati</taxon>
        <taxon>Bacteroidota</taxon>
        <taxon>Cytophagia</taxon>
        <taxon>Cytophagales</taxon>
        <taxon>Cytophagaceae</taxon>
        <taxon>Spirosoma</taxon>
    </lineage>
</organism>
<sequence length="334" mass="36998">MAEFHFFCIDAHTCGNPVRVVTGGSIPFLQGNSMSEKRQHFLREFDWIRKGLMFEPRGHDMMSGSILYPPTDPANDAGVLFIETSGCLPMCGHGTIGTVTVAIEQNLIRPKTPGVLNLEVPAGLVRAEYQQEGKKVTSVKITNIKSYLAAEKLTVDCPDLGLLTVDVAYGGNFYAIVDPQPNFPGLEHYKAEQLIGWARVMRERMNEQYTFVHPENPTINGLSHILWTGKPIAETSTARNAVFYGDKAIDRSPCGTGTSARMAQWYAQGRLKPGETFVHESIIGSIFNGRIEAETELANQPAIVPSIEGWARIHGYNHLILDEEDPYVFGFQVI</sequence>
<comment type="function">
    <text evidence="2">Catalyzes the epimerization of trans-4-hydroxy-L-proline (t4LHyp) to cis-4-hydroxy-D-proline (c4DHyp). Is likely involved in a degradation pathway that converts t4LHyp to alpha-ketoglutarate. Displays no proline racemase activity.</text>
</comment>
<comment type="catalytic activity">
    <reaction evidence="2">
        <text>trans-4-hydroxy-L-proline = cis-4-hydroxy-D-proline</text>
        <dbReference type="Rhea" id="RHEA:21152"/>
        <dbReference type="ChEBI" id="CHEBI:57690"/>
        <dbReference type="ChEBI" id="CHEBI:58375"/>
        <dbReference type="EC" id="5.1.1.8"/>
    </reaction>
</comment>
<comment type="similarity">
    <text evidence="4">Belongs to the proline racemase family.</text>
</comment>